<sequence length="484" mass="52213">MVTTTEKTNIGYIRQVIGPVVDVEFPAGKLPQIYNALVIKGKNEAGQDLSVTCEVQQLLGDRKVRAVSMSTTDGLVRGLEVIDTGAPISVPVGEATLGRIFNVLGEPVDELGPVNAATTSPIHRDAPKLTDLETKPKVFETGIKVIDLLAPYRQGGKIGLFGGAGVGKTVLIQELINNIAKEHGGVSVFGGVGERTREGNDLYQEFKESGVIDEKNIANSKVALVYGQMNEPPGARMRVGLSALTMAEHFRDVNKQDVLLFIDNIFRFVQAGSEVSALLGRMPSAVGYQPTLGTDVGQLQERITSTLEGSITSIQAVYVPADDLTDPAPATTFAHLDATTVLSRGLASKGIYPAVDPLDSTSTMLQPSIVGEEHYRTARAVQSTLQRYKELQDIIAILGLDELSEEDRQTVARARKIEKFLSQPFFVAEVFTGSPGKYVKLEDTISGFNRILNGELDDLPEQAFYLVGDIQEAIEKGAKLKAES</sequence>
<organism>
    <name type="scientific">Synechococcus sp. (strain ATCC 27144 / PCC 6301 / SAUG 1402/1)</name>
    <name type="common">Anacystis nidulans</name>
    <dbReference type="NCBI Taxonomy" id="269084"/>
    <lineage>
        <taxon>Bacteria</taxon>
        <taxon>Bacillati</taxon>
        <taxon>Cyanobacteriota</taxon>
        <taxon>Cyanophyceae</taxon>
        <taxon>Synechococcales</taxon>
        <taxon>Synechococcaceae</taxon>
        <taxon>Synechococcus</taxon>
    </lineage>
</organism>
<protein>
    <recommendedName>
        <fullName evidence="1">ATP synthase subunit beta</fullName>
        <ecNumber evidence="1">7.1.2.2</ecNumber>
    </recommendedName>
    <alternativeName>
        <fullName evidence="1">ATP synthase F1 sector subunit beta</fullName>
    </alternativeName>
    <alternativeName>
        <fullName evidence="1">F-ATPase subunit beta</fullName>
    </alternativeName>
</protein>
<gene>
    <name evidence="1" type="primary">atpD</name>
    <name evidence="1" type="synonym">atpB</name>
    <name type="ordered locus">syc1787_c</name>
</gene>
<feature type="chain" id="PRO_0000144482" description="ATP synthase subunit beta">
    <location>
        <begin position="1"/>
        <end position="484"/>
    </location>
</feature>
<feature type="binding site" evidence="1">
    <location>
        <begin position="162"/>
        <end position="169"/>
    </location>
    <ligand>
        <name>ATP</name>
        <dbReference type="ChEBI" id="CHEBI:30616"/>
    </ligand>
</feature>
<dbReference type="EC" id="7.1.2.2" evidence="1"/>
<dbReference type="EMBL" id="X05925">
    <property type="protein sequence ID" value="CAA29362.1"/>
    <property type="molecule type" value="Genomic_DNA"/>
</dbReference>
<dbReference type="EMBL" id="AP008231">
    <property type="protein sequence ID" value="BAD79977.1"/>
    <property type="molecule type" value="Genomic_DNA"/>
</dbReference>
<dbReference type="PIR" id="S10837">
    <property type="entry name" value="PWYCB"/>
</dbReference>
<dbReference type="RefSeq" id="WP_011244097.1">
    <property type="nucleotide sequence ID" value="NZ_CP085785.1"/>
</dbReference>
<dbReference type="SMR" id="P07890"/>
<dbReference type="GeneID" id="72431202"/>
<dbReference type="KEGG" id="syc:syc1787_c"/>
<dbReference type="eggNOG" id="COG0055">
    <property type="taxonomic scope" value="Bacteria"/>
</dbReference>
<dbReference type="Proteomes" id="UP000001175">
    <property type="component" value="Chromosome"/>
</dbReference>
<dbReference type="GO" id="GO:0031676">
    <property type="term" value="C:plasma membrane-derived thylakoid membrane"/>
    <property type="evidence" value="ECO:0007669"/>
    <property type="project" value="UniProtKB-SubCell"/>
</dbReference>
<dbReference type="GO" id="GO:0045259">
    <property type="term" value="C:proton-transporting ATP synthase complex"/>
    <property type="evidence" value="ECO:0007669"/>
    <property type="project" value="UniProtKB-KW"/>
</dbReference>
<dbReference type="GO" id="GO:0005524">
    <property type="term" value="F:ATP binding"/>
    <property type="evidence" value="ECO:0007669"/>
    <property type="project" value="UniProtKB-UniRule"/>
</dbReference>
<dbReference type="GO" id="GO:0016887">
    <property type="term" value="F:ATP hydrolysis activity"/>
    <property type="evidence" value="ECO:0007669"/>
    <property type="project" value="InterPro"/>
</dbReference>
<dbReference type="GO" id="GO:0046933">
    <property type="term" value="F:proton-transporting ATP synthase activity, rotational mechanism"/>
    <property type="evidence" value="ECO:0007669"/>
    <property type="project" value="UniProtKB-UniRule"/>
</dbReference>
<dbReference type="CDD" id="cd18110">
    <property type="entry name" value="ATP-synt_F1_beta_C"/>
    <property type="match status" value="1"/>
</dbReference>
<dbReference type="CDD" id="cd18115">
    <property type="entry name" value="ATP-synt_F1_beta_N"/>
    <property type="match status" value="1"/>
</dbReference>
<dbReference type="CDD" id="cd01133">
    <property type="entry name" value="F1-ATPase_beta_CD"/>
    <property type="match status" value="1"/>
</dbReference>
<dbReference type="FunFam" id="1.10.1140.10:FF:000001">
    <property type="entry name" value="ATP synthase subunit beta"/>
    <property type="match status" value="1"/>
</dbReference>
<dbReference type="FunFam" id="3.40.50.300:FF:000004">
    <property type="entry name" value="ATP synthase subunit beta"/>
    <property type="match status" value="1"/>
</dbReference>
<dbReference type="FunFam" id="2.40.10.170:FF:000002">
    <property type="entry name" value="ATP synthase subunit beta, chloroplastic"/>
    <property type="match status" value="1"/>
</dbReference>
<dbReference type="Gene3D" id="2.40.10.170">
    <property type="match status" value="1"/>
</dbReference>
<dbReference type="Gene3D" id="1.10.1140.10">
    <property type="entry name" value="Bovine Mitochondrial F1-atpase, Atp Synthase Beta Chain, Chain D, domain 3"/>
    <property type="match status" value="1"/>
</dbReference>
<dbReference type="Gene3D" id="3.40.50.300">
    <property type="entry name" value="P-loop containing nucleotide triphosphate hydrolases"/>
    <property type="match status" value="1"/>
</dbReference>
<dbReference type="HAMAP" id="MF_01347">
    <property type="entry name" value="ATP_synth_beta_bact"/>
    <property type="match status" value="1"/>
</dbReference>
<dbReference type="InterPro" id="IPR003593">
    <property type="entry name" value="AAA+_ATPase"/>
</dbReference>
<dbReference type="InterPro" id="IPR055190">
    <property type="entry name" value="ATP-synt_VA_C"/>
</dbReference>
<dbReference type="InterPro" id="IPR005722">
    <property type="entry name" value="ATP_synth_F1_bsu"/>
</dbReference>
<dbReference type="InterPro" id="IPR020003">
    <property type="entry name" value="ATPase_a/bsu_AS"/>
</dbReference>
<dbReference type="InterPro" id="IPR050053">
    <property type="entry name" value="ATPase_alpha/beta_chains"/>
</dbReference>
<dbReference type="InterPro" id="IPR004100">
    <property type="entry name" value="ATPase_F1/V1/A1_a/bsu_N"/>
</dbReference>
<dbReference type="InterPro" id="IPR036121">
    <property type="entry name" value="ATPase_F1/V1/A1_a/bsu_N_sf"/>
</dbReference>
<dbReference type="InterPro" id="IPR000194">
    <property type="entry name" value="ATPase_F1/V1/A1_a/bsu_nucl-bd"/>
</dbReference>
<dbReference type="InterPro" id="IPR024034">
    <property type="entry name" value="ATPase_F1/V1_b/a_C"/>
</dbReference>
<dbReference type="InterPro" id="IPR027417">
    <property type="entry name" value="P-loop_NTPase"/>
</dbReference>
<dbReference type="NCBIfam" id="TIGR01039">
    <property type="entry name" value="atpD"/>
    <property type="match status" value="1"/>
</dbReference>
<dbReference type="PANTHER" id="PTHR15184">
    <property type="entry name" value="ATP SYNTHASE"/>
    <property type="match status" value="1"/>
</dbReference>
<dbReference type="PANTHER" id="PTHR15184:SF71">
    <property type="entry name" value="ATP SYNTHASE SUBUNIT BETA, MITOCHONDRIAL"/>
    <property type="match status" value="1"/>
</dbReference>
<dbReference type="Pfam" id="PF00006">
    <property type="entry name" value="ATP-synt_ab"/>
    <property type="match status" value="1"/>
</dbReference>
<dbReference type="Pfam" id="PF02874">
    <property type="entry name" value="ATP-synt_ab_N"/>
    <property type="match status" value="1"/>
</dbReference>
<dbReference type="Pfam" id="PF22919">
    <property type="entry name" value="ATP-synt_VA_C"/>
    <property type="match status" value="1"/>
</dbReference>
<dbReference type="SMART" id="SM00382">
    <property type="entry name" value="AAA"/>
    <property type="match status" value="1"/>
</dbReference>
<dbReference type="SUPFAM" id="SSF47917">
    <property type="entry name" value="C-terminal domain of alpha and beta subunits of F1 ATP synthase"/>
    <property type="match status" value="1"/>
</dbReference>
<dbReference type="SUPFAM" id="SSF50615">
    <property type="entry name" value="N-terminal domain of alpha and beta subunits of F1 ATP synthase"/>
    <property type="match status" value="1"/>
</dbReference>
<dbReference type="SUPFAM" id="SSF52540">
    <property type="entry name" value="P-loop containing nucleoside triphosphate hydrolases"/>
    <property type="match status" value="1"/>
</dbReference>
<dbReference type="PROSITE" id="PS00152">
    <property type="entry name" value="ATPASE_ALPHA_BETA"/>
    <property type="match status" value="1"/>
</dbReference>
<name>ATPB_SYNP6</name>
<keyword id="KW-0066">ATP synthesis</keyword>
<keyword id="KW-0067">ATP-binding</keyword>
<keyword id="KW-0139">CF(1)</keyword>
<keyword id="KW-0375">Hydrogen ion transport</keyword>
<keyword id="KW-0406">Ion transport</keyword>
<keyword id="KW-0472">Membrane</keyword>
<keyword id="KW-0547">Nucleotide-binding</keyword>
<keyword id="KW-0793">Thylakoid</keyword>
<keyword id="KW-1278">Translocase</keyword>
<keyword id="KW-0813">Transport</keyword>
<proteinExistence type="inferred from homology"/>
<evidence type="ECO:0000255" key="1">
    <source>
        <dbReference type="HAMAP-Rule" id="MF_01347"/>
    </source>
</evidence>
<comment type="function">
    <text evidence="1">Produces ATP from ADP in the presence of a proton gradient across the membrane. The catalytic sites are hosted primarily by the beta subunits.</text>
</comment>
<comment type="catalytic activity">
    <reaction evidence="1">
        <text>ATP + H2O + 4 H(+)(in) = ADP + phosphate + 5 H(+)(out)</text>
        <dbReference type="Rhea" id="RHEA:57720"/>
        <dbReference type="ChEBI" id="CHEBI:15377"/>
        <dbReference type="ChEBI" id="CHEBI:15378"/>
        <dbReference type="ChEBI" id="CHEBI:30616"/>
        <dbReference type="ChEBI" id="CHEBI:43474"/>
        <dbReference type="ChEBI" id="CHEBI:456216"/>
        <dbReference type="EC" id="7.1.2.2"/>
    </reaction>
</comment>
<comment type="subunit">
    <text evidence="1">F-type ATPases have 2 components, CF(1) - the catalytic core - and CF(0) - the membrane proton channel. CF(1) has five subunits: alpha(3), beta(3), gamma(1), delta(1), epsilon(1). CF(0) has four main subunits: a(1), b(1), b'(1) and c(9-12).</text>
</comment>
<comment type="subcellular location">
    <subcellularLocation>
        <location evidence="1">Cellular thylakoid membrane</location>
        <topology evidence="1">Peripheral membrane protein</topology>
    </subcellularLocation>
</comment>
<comment type="similarity">
    <text evidence="1">Belongs to the ATPase alpha/beta chains family.</text>
</comment>
<reference key="1">
    <citation type="journal article" date="1987" name="J. Mol. Biol.">
        <title>The organization and sequence of the genes for ATP synthase subunits in the cyanobacterium Synechococcus 6301. Support for an endosymbiotic origin of chloroplasts.</title>
        <authorList>
            <person name="Cozens A.L."/>
            <person name="Walker J.E."/>
        </authorList>
    </citation>
    <scope>NUCLEOTIDE SEQUENCE [GENOMIC DNA]</scope>
</reference>
<reference key="2">
    <citation type="journal article" date="2007" name="Photosyn. Res.">
        <title>Complete nucleotide sequence of the freshwater unicellular cyanobacterium Synechococcus elongatus PCC 6301 chromosome: gene content and organization.</title>
        <authorList>
            <person name="Sugita C."/>
            <person name="Ogata K."/>
            <person name="Shikata M."/>
            <person name="Jikuya H."/>
            <person name="Takano J."/>
            <person name="Furumichi M."/>
            <person name="Kanehisa M."/>
            <person name="Omata T."/>
            <person name="Sugiura M."/>
            <person name="Sugita M."/>
        </authorList>
    </citation>
    <scope>NUCLEOTIDE SEQUENCE [LARGE SCALE GENOMIC DNA]</scope>
    <source>
        <strain>ATCC 27144 / PCC 6301 / SAUG 1402/1</strain>
    </source>
</reference>
<accession>P07890</accession>